<protein>
    <recommendedName>
        <fullName evidence="1">Histidinol-phosphate aminotransferase</fullName>
        <ecNumber evidence="1">2.6.1.9</ecNumber>
    </recommendedName>
    <alternativeName>
        <fullName evidence="1">Imidazole acetol-phosphate transaminase</fullName>
    </alternativeName>
</protein>
<reference key="1">
    <citation type="journal article" date="2005" name="J. Bacteriol.">
        <title>Whole-genome sequencing of Staphylococcus haemolyticus uncovers the extreme plasticity of its genome and the evolution of human-colonizing staphylococcal species.</title>
        <authorList>
            <person name="Takeuchi F."/>
            <person name="Watanabe S."/>
            <person name="Baba T."/>
            <person name="Yuzawa H."/>
            <person name="Ito T."/>
            <person name="Morimoto Y."/>
            <person name="Kuroda M."/>
            <person name="Cui L."/>
            <person name="Takahashi M."/>
            <person name="Ankai A."/>
            <person name="Baba S."/>
            <person name="Fukui S."/>
            <person name="Lee J.C."/>
            <person name="Hiramatsu K."/>
        </authorList>
    </citation>
    <scope>NUCLEOTIDE SEQUENCE [LARGE SCALE GENOMIC DNA]</scope>
    <source>
        <strain>JCSC1435</strain>
    </source>
</reference>
<feature type="chain" id="PRO_0000153459" description="Histidinol-phosphate aminotransferase">
    <location>
        <begin position="1"/>
        <end position="351"/>
    </location>
</feature>
<feature type="modified residue" description="N6-(pyridoxal phosphate)lysine" evidence="1">
    <location>
        <position position="221"/>
    </location>
</feature>
<keyword id="KW-0028">Amino-acid biosynthesis</keyword>
<keyword id="KW-0032">Aminotransferase</keyword>
<keyword id="KW-0368">Histidine biosynthesis</keyword>
<keyword id="KW-0663">Pyridoxal phosphate</keyword>
<keyword id="KW-0808">Transferase</keyword>
<dbReference type="EC" id="2.6.1.9" evidence="1"/>
<dbReference type="EMBL" id="AP006716">
    <property type="protein sequence ID" value="BAE05478.1"/>
    <property type="molecule type" value="Genomic_DNA"/>
</dbReference>
<dbReference type="RefSeq" id="WP_011276431.1">
    <property type="nucleotide sequence ID" value="NC_007168.1"/>
</dbReference>
<dbReference type="SMR" id="Q4L4E7"/>
<dbReference type="KEGG" id="sha:SH2169"/>
<dbReference type="eggNOG" id="COG0079">
    <property type="taxonomic scope" value="Bacteria"/>
</dbReference>
<dbReference type="HOGENOM" id="CLU_017584_3_3_9"/>
<dbReference type="OrthoDB" id="9813612at2"/>
<dbReference type="UniPathway" id="UPA00031">
    <property type="reaction ID" value="UER00012"/>
</dbReference>
<dbReference type="Proteomes" id="UP000000543">
    <property type="component" value="Chromosome"/>
</dbReference>
<dbReference type="GO" id="GO:0004400">
    <property type="term" value="F:histidinol-phosphate transaminase activity"/>
    <property type="evidence" value="ECO:0007669"/>
    <property type="project" value="UniProtKB-UniRule"/>
</dbReference>
<dbReference type="GO" id="GO:0030170">
    <property type="term" value="F:pyridoxal phosphate binding"/>
    <property type="evidence" value="ECO:0007669"/>
    <property type="project" value="InterPro"/>
</dbReference>
<dbReference type="GO" id="GO:0000105">
    <property type="term" value="P:L-histidine biosynthetic process"/>
    <property type="evidence" value="ECO:0007669"/>
    <property type="project" value="UniProtKB-UniRule"/>
</dbReference>
<dbReference type="CDD" id="cd00609">
    <property type="entry name" value="AAT_like"/>
    <property type="match status" value="1"/>
</dbReference>
<dbReference type="Gene3D" id="3.90.1150.10">
    <property type="entry name" value="Aspartate Aminotransferase, domain 1"/>
    <property type="match status" value="1"/>
</dbReference>
<dbReference type="Gene3D" id="3.40.640.10">
    <property type="entry name" value="Type I PLP-dependent aspartate aminotransferase-like (Major domain)"/>
    <property type="match status" value="1"/>
</dbReference>
<dbReference type="HAMAP" id="MF_01023">
    <property type="entry name" value="HisC_aminotrans_2"/>
    <property type="match status" value="1"/>
</dbReference>
<dbReference type="InterPro" id="IPR001917">
    <property type="entry name" value="Aminotrans_II_pyridoxalP_BS"/>
</dbReference>
<dbReference type="InterPro" id="IPR004839">
    <property type="entry name" value="Aminotransferase_I/II_large"/>
</dbReference>
<dbReference type="InterPro" id="IPR005861">
    <property type="entry name" value="HisP_aminotrans"/>
</dbReference>
<dbReference type="InterPro" id="IPR050106">
    <property type="entry name" value="HistidinolP_aminotransfase"/>
</dbReference>
<dbReference type="InterPro" id="IPR015424">
    <property type="entry name" value="PyrdxlP-dep_Trfase"/>
</dbReference>
<dbReference type="InterPro" id="IPR015421">
    <property type="entry name" value="PyrdxlP-dep_Trfase_major"/>
</dbReference>
<dbReference type="InterPro" id="IPR015422">
    <property type="entry name" value="PyrdxlP-dep_Trfase_small"/>
</dbReference>
<dbReference type="NCBIfam" id="TIGR01141">
    <property type="entry name" value="hisC"/>
    <property type="match status" value="1"/>
</dbReference>
<dbReference type="PANTHER" id="PTHR43643:SF3">
    <property type="entry name" value="HISTIDINOL-PHOSPHATE AMINOTRANSFERASE"/>
    <property type="match status" value="1"/>
</dbReference>
<dbReference type="PANTHER" id="PTHR43643">
    <property type="entry name" value="HISTIDINOL-PHOSPHATE AMINOTRANSFERASE 2"/>
    <property type="match status" value="1"/>
</dbReference>
<dbReference type="Pfam" id="PF00155">
    <property type="entry name" value="Aminotran_1_2"/>
    <property type="match status" value="1"/>
</dbReference>
<dbReference type="SUPFAM" id="SSF53383">
    <property type="entry name" value="PLP-dependent transferases"/>
    <property type="match status" value="1"/>
</dbReference>
<dbReference type="PROSITE" id="PS00599">
    <property type="entry name" value="AA_TRANSFER_CLASS_2"/>
    <property type="match status" value="1"/>
</dbReference>
<evidence type="ECO:0000255" key="1">
    <source>
        <dbReference type="HAMAP-Rule" id="MF_01023"/>
    </source>
</evidence>
<comment type="catalytic activity">
    <reaction evidence="1">
        <text>L-histidinol phosphate + 2-oxoglutarate = 3-(imidazol-4-yl)-2-oxopropyl phosphate + L-glutamate</text>
        <dbReference type="Rhea" id="RHEA:23744"/>
        <dbReference type="ChEBI" id="CHEBI:16810"/>
        <dbReference type="ChEBI" id="CHEBI:29985"/>
        <dbReference type="ChEBI" id="CHEBI:57766"/>
        <dbReference type="ChEBI" id="CHEBI:57980"/>
        <dbReference type="EC" id="2.6.1.9"/>
    </reaction>
</comment>
<comment type="cofactor">
    <cofactor evidence="1">
        <name>pyridoxal 5'-phosphate</name>
        <dbReference type="ChEBI" id="CHEBI:597326"/>
    </cofactor>
</comment>
<comment type="pathway">
    <text evidence="1">Amino-acid biosynthesis; L-histidine biosynthesis; L-histidine from 5-phospho-alpha-D-ribose 1-diphosphate: step 7/9.</text>
</comment>
<comment type="subunit">
    <text evidence="1">Homodimer.</text>
</comment>
<comment type="similarity">
    <text evidence="1">Belongs to the class-II pyridoxal-phosphate-dependent aminotransferase family. Histidinol-phosphate aminotransferase subfamily.</text>
</comment>
<proteinExistence type="inferred from homology"/>
<gene>
    <name evidence="1" type="primary">hisC</name>
    <name type="ordered locus">SH2169</name>
</gene>
<accession>Q4L4E7</accession>
<organism>
    <name type="scientific">Staphylococcus haemolyticus (strain JCSC1435)</name>
    <dbReference type="NCBI Taxonomy" id="279808"/>
    <lineage>
        <taxon>Bacteria</taxon>
        <taxon>Bacillati</taxon>
        <taxon>Bacillota</taxon>
        <taxon>Bacilli</taxon>
        <taxon>Bacillales</taxon>
        <taxon>Staphylococcaceae</taxon>
        <taxon>Staphylococcus</taxon>
    </lineage>
</organism>
<name>HIS8_STAHJ</name>
<sequence>MKQQLNQLAAYQPGLSPQALKEKHGIEGELYKLASNENLYGPSPKAKQAVQAHLDELFYYPETGSPSLRKAISEHLNVDPSRILFGAGLDEVILMISRAVLTPGDKIVTSEGTFGQYYHNAIVESAEVVQVPLLNGGFDLENIIKEVDEETALVWLCNPNNPTGTYFNHDELESFLERVPSHVPVLIDEAYFEFVTAEDYPDTLKLQERFDNAFLLRTFSKAYGLAGLRVGYVVATNEAIEKWNIIRPPFNVTRISEYAAIAALEDQAYLKDVTAKNAKEREKFFEIPQSEHFLPSQTNFVFVVTEKAQELYEALLKVGCITRPFPTGVRITIGFPEQNDRMIEVLKHFDY</sequence>